<protein>
    <recommendedName>
        <fullName>mRNA-decapping protein D10</fullName>
        <ecNumber>3.1.3.-</ecNumber>
    </recommendedName>
</protein>
<sequence>MGEYYKNKLLLRPSVYSDNIQKIKLVAYEYGKLHAKYPLSVIGIMKTIDDKFVLCHRYNSFLFSEIAFTKDKRRKIRLFKKYSKYMSNIERDILSYKLSLPNNYNTNHIDIIFPGGKIKDLESITNCLVREIKEELNIDSSYLAICKNCFVYGSIYDRLIDKDFEVIALYVETDLTSRQILNRFIPNREIKGISFIDARDINKDYLYTNVIKYIINAVRTSASNS</sequence>
<evidence type="ECO:0000250" key="1"/>
<evidence type="ECO:0000255" key="2">
    <source>
        <dbReference type="PROSITE-ProRule" id="PRU00794"/>
    </source>
</evidence>
<evidence type="ECO:0000305" key="3"/>
<proteinExistence type="evidence at transcript level"/>
<feature type="chain" id="PRO_0000057095" description="mRNA-decapping protein D10">
    <location>
        <begin position="1"/>
        <end position="225"/>
    </location>
</feature>
<feature type="domain" description="Nudix hydrolase" evidence="2">
    <location>
        <begin position="35"/>
        <end position="218"/>
    </location>
</feature>
<feature type="short sequence motif" description="Nudix box">
    <location>
        <begin position="116"/>
        <end position="137"/>
    </location>
</feature>
<feature type="active site" description="Nucleophile" evidence="1">
    <location>
        <position position="131"/>
    </location>
</feature>
<feature type="binding site" evidence="1">
    <location>
        <position position="122"/>
    </location>
    <ligand>
        <name>Mg(2+)</name>
        <dbReference type="ChEBI" id="CHEBI:18420"/>
    </ligand>
</feature>
<feature type="binding site" evidence="1">
    <location>
        <position position="135"/>
    </location>
    <ligand>
        <name>Mn(2+)</name>
        <dbReference type="ChEBI" id="CHEBI:29035"/>
    </ligand>
</feature>
<feature type="binding site" evidence="1">
    <location>
        <position position="157"/>
    </location>
    <ligand>
        <name>Mg(2+)</name>
        <dbReference type="ChEBI" id="CHEBI:18420"/>
    </ligand>
</feature>
<comment type="function">
    <text evidence="1">Decapping enzyme required for the removal of the 5'-end m7GpppN cap tethered to viral and host mRNAs to allow their decay in cells. May therefore accelerate viral and cellular mRNA turnover to eliminate competing host mRNAs and allow stage-specific synthesis of viral proteins. Acceleration of the turnover of cellular transcripts may even promote the shutoff of host protein synthesis (By similarity).</text>
</comment>
<comment type="cofactor">
    <cofactor evidence="1">
        <name>Mg(2+)</name>
        <dbReference type="ChEBI" id="CHEBI:18420"/>
    </cofactor>
    <cofactor evidence="1">
        <name>Mn(2+)</name>
        <dbReference type="ChEBI" id="CHEBI:29035"/>
    </cofactor>
</comment>
<comment type="induction">
    <text>Expressed in the late phase of the viral replicative cycle.</text>
</comment>
<comment type="similarity">
    <text evidence="3">Belongs to the Nudix hydrolase family.</text>
</comment>
<gene>
    <name type="ordered locus">FPV053</name>
    <name type="ORF">D10</name>
    <name type="ORF">FP-D10</name>
    <name type="ORF">FPD10</name>
</gene>
<organism>
    <name type="scientific">Fowlpox virus (strain NVSL)</name>
    <name type="common">FPV</name>
    <dbReference type="NCBI Taxonomy" id="928301"/>
    <lineage>
        <taxon>Viruses</taxon>
        <taxon>Varidnaviria</taxon>
        <taxon>Bamfordvirae</taxon>
        <taxon>Nucleocytoviricota</taxon>
        <taxon>Pokkesviricetes</taxon>
        <taxon>Chitovirales</taxon>
        <taxon>Poxviridae</taxon>
        <taxon>Chordopoxvirinae</taxon>
        <taxon>Avipoxvirus</taxon>
        <taxon>Fowlpox virus</taxon>
    </lineage>
</organism>
<dbReference type="EC" id="3.1.3.-"/>
<dbReference type="EMBL" id="AJ005163">
    <property type="protein sequence ID" value="CAA06400.1"/>
    <property type="molecule type" value="Genomic_DNA"/>
</dbReference>
<dbReference type="EMBL" id="AF198100">
    <property type="protein sequence ID" value="AAF44397.1"/>
    <property type="molecule type" value="Genomic_DNA"/>
</dbReference>
<dbReference type="PIR" id="S42250">
    <property type="entry name" value="S42250"/>
</dbReference>
<dbReference type="RefSeq" id="NP_039016.1">
    <property type="nucleotide sequence ID" value="NC_002188.1"/>
</dbReference>
<dbReference type="SMR" id="P32817"/>
<dbReference type="GeneID" id="1486601"/>
<dbReference type="KEGG" id="vg:1486601"/>
<dbReference type="Proteomes" id="UP000008597">
    <property type="component" value="Segment"/>
</dbReference>
<dbReference type="GO" id="GO:0016787">
    <property type="term" value="F:hydrolase activity"/>
    <property type="evidence" value="ECO:0007669"/>
    <property type="project" value="UniProtKB-KW"/>
</dbReference>
<dbReference type="GO" id="GO:0046872">
    <property type="term" value="F:metal ion binding"/>
    <property type="evidence" value="ECO:0007669"/>
    <property type="project" value="UniProtKB-KW"/>
</dbReference>
<dbReference type="Gene3D" id="3.90.79.10">
    <property type="entry name" value="Nucleoside Triphosphate Pyrophosphohydrolase"/>
    <property type="match status" value="1"/>
</dbReference>
<dbReference type="InterPro" id="IPR015797">
    <property type="entry name" value="NUDIX_hydrolase-like_dom_sf"/>
</dbReference>
<dbReference type="InterPro" id="IPR020084">
    <property type="entry name" value="NUDIX_hydrolase_CS"/>
</dbReference>
<dbReference type="InterPro" id="IPR000086">
    <property type="entry name" value="NUDIX_hydrolase_dom"/>
</dbReference>
<dbReference type="InterPro" id="IPR003301">
    <property type="entry name" value="Vaccinia_D10_decapping"/>
</dbReference>
<dbReference type="Pfam" id="PF00293">
    <property type="entry name" value="NUDIX"/>
    <property type="match status" value="1"/>
</dbReference>
<dbReference type="PRINTS" id="PR01364">
    <property type="entry name" value="VD10PROTEIN"/>
</dbReference>
<dbReference type="SUPFAM" id="SSF55811">
    <property type="entry name" value="Nudix"/>
    <property type="match status" value="1"/>
</dbReference>
<dbReference type="PROSITE" id="PS51462">
    <property type="entry name" value="NUDIX"/>
    <property type="match status" value="1"/>
</dbReference>
<dbReference type="PROSITE" id="PS00893">
    <property type="entry name" value="NUDIX_BOX"/>
    <property type="match status" value="1"/>
</dbReference>
<accession>P32817</accession>
<name>D10_FOWPN</name>
<organismHost>
    <name type="scientific">Vertebrata</name>
    <dbReference type="NCBI Taxonomy" id="7742"/>
</organismHost>
<keyword id="KW-0378">Hydrolase</keyword>
<keyword id="KW-0460">Magnesium</keyword>
<keyword id="KW-0464">Manganese</keyword>
<keyword id="KW-0479">Metal-binding</keyword>
<keyword id="KW-1185">Reference proteome</keyword>
<reference key="1">
    <citation type="journal article" date="1990" name="J. Gen. Virol.">
        <title>Analysis of the fowlpox virus genome region corresponding to the vaccinia virus D6 to A1 region: location of, and variation in, non-essential genes in poxviruses.</title>
        <authorList>
            <person name="Binns M.M."/>
            <person name="Britton B.S."/>
            <person name="Mason C."/>
            <person name="Boursnell M.E.G."/>
        </authorList>
    </citation>
    <scope>NUCLEOTIDE SEQUENCE [GENOMIC DNA]</scope>
</reference>
<reference key="2">
    <citation type="submission" date="1998-05" db="EMBL/GenBank/DDBJ databases">
        <authorList>
            <person name="Skinner M.A."/>
        </authorList>
    </citation>
    <scope>NUCLEOTIDE SEQUENCE [GENOMIC DNA]</scope>
    <source>
        <strain>FP-9 / Isolate HP-440</strain>
    </source>
</reference>
<reference key="3">
    <citation type="journal article" date="2000" name="J. Virol.">
        <title>The genome of fowlpox virus.</title>
        <authorList>
            <person name="Afonso C.L."/>
            <person name="Tulman E.R."/>
            <person name="Lu Z."/>
            <person name="Zsak L."/>
            <person name="Kutish G.F."/>
            <person name="Rock D.L."/>
        </authorList>
    </citation>
    <scope>NUCLEOTIDE SEQUENCE [LARGE SCALE GENOMIC DNA]</scope>
</reference>